<sequence length="259" mass="30109">MNKLKSSQKDKVRQFMVFTQSSEKTAVSCLSQNDWKLDVATDNFFQNPELYIRESVKGSLDRKKLEQLYNRYKDPQDENKIGIDGIQQFCDDLALDPASITVLIIAWKFRAATQCEFSKLEFMDGMTELGCDSIEKLKAQIPKMEQELKEPGRFKDFYQFTFNFAKNPGQKGLDLEMAIAYWNLVLNGRFKFLDLWNKFLLEHHKRSIPKDTWNLLLDFSTMIADDMSNYDEEGAWPVLIDDFVEFARPQIAGTKSTTV</sequence>
<gene>
    <name type="primary">DCUN1D1</name>
    <name type="synonym">DCUN1L1</name>
    <name type="ORF">RCJMB04_9c8</name>
</gene>
<proteinExistence type="evidence at transcript level"/>
<protein>
    <recommendedName>
        <fullName>DCN1-like protein 1</fullName>
    </recommendedName>
    <alternativeName>
        <fullName>DCUN1 domain-containing protein 1</fullName>
    </alternativeName>
    <alternativeName>
        <fullName>Defective in cullin neddylation protein 1-like protein 1</fullName>
    </alternativeName>
</protein>
<dbReference type="EMBL" id="AJ719993">
    <property type="protein sequence ID" value="CAG31652.1"/>
    <property type="molecule type" value="mRNA"/>
</dbReference>
<dbReference type="RefSeq" id="NP_001026489.1">
    <property type="nucleotide sequence ID" value="NM_001031318.1"/>
</dbReference>
<dbReference type="SMR" id="Q5ZKU1"/>
<dbReference type="FunCoup" id="Q5ZKU1">
    <property type="interactions" value="2016"/>
</dbReference>
<dbReference type="STRING" id="9031.ENSGALP00000014300"/>
<dbReference type="PaxDb" id="9031-ENSGALP00000014300"/>
<dbReference type="Ensembl" id="ENSGALT00010039832.1">
    <property type="protein sequence ID" value="ENSGALP00010023049.1"/>
    <property type="gene ID" value="ENSGALG00010016529.1"/>
</dbReference>
<dbReference type="Ensembl" id="ENSGALT00010039837.1">
    <property type="protein sequence ID" value="ENSGALP00010023054.1"/>
    <property type="gene ID" value="ENSGALG00010016529.1"/>
</dbReference>
<dbReference type="GeneID" id="424963"/>
<dbReference type="KEGG" id="gga:424963"/>
<dbReference type="CTD" id="54165"/>
<dbReference type="VEuPathDB" id="HostDB:geneid_424963"/>
<dbReference type="eggNOG" id="KOG3077">
    <property type="taxonomic scope" value="Eukaryota"/>
</dbReference>
<dbReference type="GeneTree" id="ENSGT00940000154552"/>
<dbReference type="HOGENOM" id="CLU_047042_0_1_1"/>
<dbReference type="InParanoid" id="Q5ZKU1"/>
<dbReference type="OMA" id="PHEPDKM"/>
<dbReference type="OrthoDB" id="286637at2759"/>
<dbReference type="PhylomeDB" id="Q5ZKU1"/>
<dbReference type="Reactome" id="R-GGA-8951664">
    <property type="pathway name" value="Neddylation"/>
</dbReference>
<dbReference type="PRO" id="PR:Q5ZKU1"/>
<dbReference type="Proteomes" id="UP000000539">
    <property type="component" value="Chromosome 9"/>
</dbReference>
<dbReference type="Bgee" id="ENSGALG00000008807">
    <property type="expression patterns" value="Expressed in heart and 14 other cell types or tissues"/>
</dbReference>
<dbReference type="GO" id="GO:0005634">
    <property type="term" value="C:nucleus"/>
    <property type="evidence" value="ECO:0007669"/>
    <property type="project" value="UniProtKB-SubCell"/>
</dbReference>
<dbReference type="GO" id="GO:0000151">
    <property type="term" value="C:ubiquitin ligase complex"/>
    <property type="evidence" value="ECO:0000318"/>
    <property type="project" value="GO_Central"/>
</dbReference>
<dbReference type="GO" id="GO:0097602">
    <property type="term" value="F:cullin family protein binding"/>
    <property type="evidence" value="ECO:0000318"/>
    <property type="project" value="GO_Central"/>
</dbReference>
<dbReference type="GO" id="GO:0031624">
    <property type="term" value="F:ubiquitin conjugating enzyme binding"/>
    <property type="evidence" value="ECO:0000318"/>
    <property type="project" value="GO_Central"/>
</dbReference>
<dbReference type="GO" id="GO:0032182">
    <property type="term" value="F:ubiquitin-like protein binding"/>
    <property type="evidence" value="ECO:0000318"/>
    <property type="project" value="GO_Central"/>
</dbReference>
<dbReference type="GO" id="GO:2000436">
    <property type="term" value="P:positive regulation of protein neddylation"/>
    <property type="evidence" value="ECO:0000250"/>
    <property type="project" value="UniProtKB"/>
</dbReference>
<dbReference type="GO" id="GO:0045116">
    <property type="term" value="P:protein neddylation"/>
    <property type="evidence" value="ECO:0000318"/>
    <property type="project" value="GO_Central"/>
</dbReference>
<dbReference type="FunFam" id="1.10.238.10:FF:000030">
    <property type="entry name" value="DCN1-like protein"/>
    <property type="match status" value="1"/>
</dbReference>
<dbReference type="FunFam" id="1.10.238.200:FF:000001">
    <property type="entry name" value="DCN1-like protein"/>
    <property type="match status" value="1"/>
</dbReference>
<dbReference type="FunFam" id="1.10.8.10:FF:000021">
    <property type="entry name" value="DCN1-like protein"/>
    <property type="match status" value="1"/>
</dbReference>
<dbReference type="Gene3D" id="1.10.238.200">
    <property type="entry name" value="Cullin, PONY binding domain"/>
    <property type="match status" value="1"/>
</dbReference>
<dbReference type="Gene3D" id="1.10.8.10">
    <property type="entry name" value="DNA helicase RuvA subunit, C-terminal domain"/>
    <property type="match status" value="1"/>
</dbReference>
<dbReference type="Gene3D" id="1.10.238.10">
    <property type="entry name" value="EF-hand"/>
    <property type="match status" value="1"/>
</dbReference>
<dbReference type="InterPro" id="IPR014764">
    <property type="entry name" value="DCN-prot"/>
</dbReference>
<dbReference type="InterPro" id="IPR042460">
    <property type="entry name" value="DCN1-like_PONY"/>
</dbReference>
<dbReference type="InterPro" id="IPR005176">
    <property type="entry name" value="PONY_dom"/>
</dbReference>
<dbReference type="InterPro" id="IPR009060">
    <property type="entry name" value="UBA-like_sf"/>
</dbReference>
<dbReference type="PANTHER" id="PTHR12281:SF10">
    <property type="entry name" value="DCN1-LIKE PROTEIN 1"/>
    <property type="match status" value="1"/>
</dbReference>
<dbReference type="PANTHER" id="PTHR12281">
    <property type="entry name" value="RP42 RELATED"/>
    <property type="match status" value="1"/>
</dbReference>
<dbReference type="Pfam" id="PF03556">
    <property type="entry name" value="Cullin_binding"/>
    <property type="match status" value="1"/>
</dbReference>
<dbReference type="Pfam" id="PF14555">
    <property type="entry name" value="UBA_4"/>
    <property type="match status" value="1"/>
</dbReference>
<dbReference type="SUPFAM" id="SSF46934">
    <property type="entry name" value="UBA-like"/>
    <property type="match status" value="1"/>
</dbReference>
<dbReference type="PROSITE" id="PS51229">
    <property type="entry name" value="DCUN1"/>
    <property type="match status" value="1"/>
</dbReference>
<organism>
    <name type="scientific">Gallus gallus</name>
    <name type="common">Chicken</name>
    <dbReference type="NCBI Taxonomy" id="9031"/>
    <lineage>
        <taxon>Eukaryota</taxon>
        <taxon>Metazoa</taxon>
        <taxon>Chordata</taxon>
        <taxon>Craniata</taxon>
        <taxon>Vertebrata</taxon>
        <taxon>Euteleostomi</taxon>
        <taxon>Archelosauria</taxon>
        <taxon>Archosauria</taxon>
        <taxon>Dinosauria</taxon>
        <taxon>Saurischia</taxon>
        <taxon>Theropoda</taxon>
        <taxon>Coelurosauria</taxon>
        <taxon>Aves</taxon>
        <taxon>Neognathae</taxon>
        <taxon>Galloanserae</taxon>
        <taxon>Galliformes</taxon>
        <taxon>Phasianidae</taxon>
        <taxon>Phasianinae</taxon>
        <taxon>Gallus</taxon>
    </lineage>
</organism>
<accession>Q5ZKU1</accession>
<evidence type="ECO:0000250" key="1">
    <source>
        <dbReference type="UniProtKB" id="Q96GG9"/>
    </source>
</evidence>
<evidence type="ECO:0000255" key="2">
    <source>
        <dbReference type="PROSITE-ProRule" id="PRU00574"/>
    </source>
</evidence>
<comment type="function">
    <text evidence="1">Part of an E3 ubiquitin ligase complex for neddylation. Promotes neddylation of cullin components of E3 cullin-RING ubiquitin ligase complexes. Acts by binding to cullin-RBX1 complexes in the cytoplasm and promoting their nuclear translocation, enhancing recruitment of E2-NEDD8 (UBE2M-NEDD8) thioester to the complex, and optimizing the orientation of proteins in the complex to allow efficient transfer of NEDD8 from the E2 to the cullin substrates.</text>
</comment>
<comment type="subcellular location">
    <subcellularLocation>
        <location evidence="1">Nucleus</location>
    </subcellularLocation>
</comment>
<name>DCNL1_CHICK</name>
<feature type="chain" id="PRO_0000129500" description="DCN1-like protein 1">
    <location>
        <begin position="1"/>
        <end position="259"/>
    </location>
</feature>
<feature type="domain" description="UBA-like">
    <location>
        <begin position="8"/>
        <end position="45"/>
    </location>
</feature>
<feature type="domain" description="DCUN1" evidence="2">
    <location>
        <begin position="60"/>
        <end position="248"/>
    </location>
</feature>
<reference key="1">
    <citation type="journal article" date="2005" name="Genome Biol.">
        <title>Full-length cDNAs from chicken bursal lymphocytes to facilitate gene function analysis.</title>
        <authorList>
            <person name="Caldwell R.B."/>
            <person name="Kierzek A.M."/>
            <person name="Arakawa H."/>
            <person name="Bezzubov Y."/>
            <person name="Zaim J."/>
            <person name="Fiedler P."/>
            <person name="Kutter S."/>
            <person name="Blagodatski A."/>
            <person name="Kostovska D."/>
            <person name="Koter M."/>
            <person name="Plachy J."/>
            <person name="Carninci P."/>
            <person name="Hayashizaki Y."/>
            <person name="Buerstedde J.-M."/>
        </authorList>
    </citation>
    <scope>NUCLEOTIDE SEQUENCE [LARGE SCALE MRNA]</scope>
    <source>
        <strain>CB</strain>
        <tissue>Bursa of Fabricius</tissue>
    </source>
</reference>
<keyword id="KW-0539">Nucleus</keyword>
<keyword id="KW-1185">Reference proteome</keyword>
<keyword id="KW-0833">Ubl conjugation pathway</keyword>